<protein>
    <recommendedName>
        <fullName evidence="1">Large ribosomal subunit protein bL17</fullName>
    </recommendedName>
    <alternativeName>
        <fullName evidence="2">50S ribosomal protein L17</fullName>
    </alternativeName>
</protein>
<comment type="subunit">
    <text evidence="1">Part of the 50S ribosomal subunit. Contacts protein L32.</text>
</comment>
<comment type="similarity">
    <text evidence="1">Belongs to the bacterial ribosomal protein bL17 family.</text>
</comment>
<organism>
    <name type="scientific">Xylella fastidiosa (strain Temecula1 / ATCC 700964)</name>
    <dbReference type="NCBI Taxonomy" id="183190"/>
    <lineage>
        <taxon>Bacteria</taxon>
        <taxon>Pseudomonadati</taxon>
        <taxon>Pseudomonadota</taxon>
        <taxon>Gammaproteobacteria</taxon>
        <taxon>Lysobacterales</taxon>
        <taxon>Lysobacteraceae</taxon>
        <taxon>Xylella</taxon>
    </lineage>
</organism>
<keyword id="KW-1185">Reference proteome</keyword>
<keyword id="KW-0687">Ribonucleoprotein</keyword>
<keyword id="KW-0689">Ribosomal protein</keyword>
<feature type="chain" id="PRO_0000306404" description="Large ribosomal subunit protein bL17">
    <location>
        <begin position="1"/>
        <end position="126"/>
    </location>
</feature>
<sequence>MRHQKSGRKFNRTDAHRGAMFSNMIASLFKYQLIKTTLPKAKELRRFAEPLITLAKVDSVANRRLAFARLRNKEAVGILFSNLGPRYITRPGGYIRLLKCGFRHGDNAPMAYVEMLERPIIAEEVT</sequence>
<gene>
    <name evidence="1" type="primary">rplQ</name>
    <name type="ordered locus">PD_0462</name>
</gene>
<reference key="1">
    <citation type="journal article" date="2003" name="J. Bacteriol.">
        <title>Comparative analyses of the complete genome sequences of Pierce's disease and citrus variegated chlorosis strains of Xylella fastidiosa.</title>
        <authorList>
            <person name="Van Sluys M.A."/>
            <person name="de Oliveira M.C."/>
            <person name="Monteiro-Vitorello C.B."/>
            <person name="Miyaki C.Y."/>
            <person name="Furlan L.R."/>
            <person name="Camargo L.E.A."/>
            <person name="da Silva A.C.R."/>
            <person name="Moon D.H."/>
            <person name="Takita M.A."/>
            <person name="Lemos E.G.M."/>
            <person name="Machado M.A."/>
            <person name="Ferro M.I.T."/>
            <person name="da Silva F.R."/>
            <person name="Goldman M.H.S."/>
            <person name="Goldman G.H."/>
            <person name="Lemos M.V.F."/>
            <person name="El-Dorry H."/>
            <person name="Tsai S.M."/>
            <person name="Carrer H."/>
            <person name="Carraro D.M."/>
            <person name="de Oliveira R.C."/>
            <person name="Nunes L.R."/>
            <person name="Siqueira W.J."/>
            <person name="Coutinho L.L."/>
            <person name="Kimura E.T."/>
            <person name="Ferro E.S."/>
            <person name="Harakava R."/>
            <person name="Kuramae E.E."/>
            <person name="Marino C.L."/>
            <person name="Giglioti E."/>
            <person name="Abreu I.L."/>
            <person name="Alves L.M.C."/>
            <person name="do Amaral A.M."/>
            <person name="Baia G.S."/>
            <person name="Blanco S.R."/>
            <person name="Brito M.S."/>
            <person name="Cannavan F.S."/>
            <person name="Celestino A.V."/>
            <person name="da Cunha A.F."/>
            <person name="Fenille R.C."/>
            <person name="Ferro J.A."/>
            <person name="Formighieri E.F."/>
            <person name="Kishi L.T."/>
            <person name="Leoni S.G."/>
            <person name="Oliveira A.R."/>
            <person name="Rosa V.E. Jr."/>
            <person name="Sassaki F.T."/>
            <person name="Sena J.A.D."/>
            <person name="de Souza A.A."/>
            <person name="Truffi D."/>
            <person name="Tsukumo F."/>
            <person name="Yanai G.M."/>
            <person name="Zaros L.G."/>
            <person name="Civerolo E.L."/>
            <person name="Simpson A.J.G."/>
            <person name="Almeida N.F. Jr."/>
            <person name="Setubal J.C."/>
            <person name="Kitajima J.P."/>
        </authorList>
    </citation>
    <scope>NUCLEOTIDE SEQUENCE [LARGE SCALE GENOMIC DNA]</scope>
    <source>
        <strain>Temecula1 / ATCC 700964</strain>
    </source>
</reference>
<evidence type="ECO:0000255" key="1">
    <source>
        <dbReference type="HAMAP-Rule" id="MF_01368"/>
    </source>
</evidence>
<evidence type="ECO:0000305" key="2"/>
<accession>Q87E59</accession>
<proteinExistence type="inferred from homology"/>
<dbReference type="EMBL" id="AE009442">
    <property type="protein sequence ID" value="AAO28341.1"/>
    <property type="molecule type" value="Genomic_DNA"/>
</dbReference>
<dbReference type="RefSeq" id="WP_004090145.1">
    <property type="nucleotide sequence ID" value="NC_004556.1"/>
</dbReference>
<dbReference type="SMR" id="Q87E59"/>
<dbReference type="GeneID" id="93904164"/>
<dbReference type="KEGG" id="xft:PD_0462"/>
<dbReference type="HOGENOM" id="CLU_074407_2_0_6"/>
<dbReference type="Proteomes" id="UP000002516">
    <property type="component" value="Chromosome"/>
</dbReference>
<dbReference type="GO" id="GO:0022625">
    <property type="term" value="C:cytosolic large ribosomal subunit"/>
    <property type="evidence" value="ECO:0007669"/>
    <property type="project" value="TreeGrafter"/>
</dbReference>
<dbReference type="GO" id="GO:0003735">
    <property type="term" value="F:structural constituent of ribosome"/>
    <property type="evidence" value="ECO:0007669"/>
    <property type="project" value="InterPro"/>
</dbReference>
<dbReference type="GO" id="GO:0006412">
    <property type="term" value="P:translation"/>
    <property type="evidence" value="ECO:0007669"/>
    <property type="project" value="UniProtKB-UniRule"/>
</dbReference>
<dbReference type="FunFam" id="3.90.1030.10:FF:000001">
    <property type="entry name" value="50S ribosomal protein L17"/>
    <property type="match status" value="1"/>
</dbReference>
<dbReference type="Gene3D" id="3.90.1030.10">
    <property type="entry name" value="Ribosomal protein L17"/>
    <property type="match status" value="1"/>
</dbReference>
<dbReference type="HAMAP" id="MF_01368">
    <property type="entry name" value="Ribosomal_bL17"/>
    <property type="match status" value="1"/>
</dbReference>
<dbReference type="InterPro" id="IPR000456">
    <property type="entry name" value="Ribosomal_bL17"/>
</dbReference>
<dbReference type="InterPro" id="IPR047859">
    <property type="entry name" value="Ribosomal_bL17_CS"/>
</dbReference>
<dbReference type="InterPro" id="IPR036373">
    <property type="entry name" value="Ribosomal_bL17_sf"/>
</dbReference>
<dbReference type="NCBIfam" id="TIGR00059">
    <property type="entry name" value="L17"/>
    <property type="match status" value="1"/>
</dbReference>
<dbReference type="PANTHER" id="PTHR14413:SF16">
    <property type="entry name" value="LARGE RIBOSOMAL SUBUNIT PROTEIN BL17M"/>
    <property type="match status" value="1"/>
</dbReference>
<dbReference type="PANTHER" id="PTHR14413">
    <property type="entry name" value="RIBOSOMAL PROTEIN L17"/>
    <property type="match status" value="1"/>
</dbReference>
<dbReference type="Pfam" id="PF01196">
    <property type="entry name" value="Ribosomal_L17"/>
    <property type="match status" value="1"/>
</dbReference>
<dbReference type="SUPFAM" id="SSF64263">
    <property type="entry name" value="Prokaryotic ribosomal protein L17"/>
    <property type="match status" value="1"/>
</dbReference>
<dbReference type="PROSITE" id="PS01167">
    <property type="entry name" value="RIBOSOMAL_L17"/>
    <property type="match status" value="1"/>
</dbReference>
<name>RL17_XYLFT</name>